<protein>
    <recommendedName>
        <fullName evidence="1">DNA-directed RNA polymerase subunit beta'</fullName>
        <shortName evidence="1">RNAP subunit beta'</shortName>
        <ecNumber evidence="1">2.7.7.6</ecNumber>
    </recommendedName>
    <alternativeName>
        <fullName evidence="1">RNA polymerase subunit beta'</fullName>
    </alternativeName>
    <alternativeName>
        <fullName evidence="1">Transcriptase subunit beta'</fullName>
    </alternativeName>
</protein>
<keyword id="KW-0240">DNA-directed RNA polymerase</keyword>
<keyword id="KW-0460">Magnesium</keyword>
<keyword id="KW-0479">Metal-binding</keyword>
<keyword id="KW-0548">Nucleotidyltransferase</keyword>
<keyword id="KW-1185">Reference proteome</keyword>
<keyword id="KW-0804">Transcription</keyword>
<keyword id="KW-0808">Transferase</keyword>
<keyword id="KW-0862">Zinc</keyword>
<comment type="function">
    <text evidence="1">DNA-dependent RNA polymerase catalyzes the transcription of DNA into RNA using the four ribonucleoside triphosphates as substrates.</text>
</comment>
<comment type="catalytic activity">
    <reaction evidence="1">
        <text>RNA(n) + a ribonucleoside 5'-triphosphate = RNA(n+1) + diphosphate</text>
        <dbReference type="Rhea" id="RHEA:21248"/>
        <dbReference type="Rhea" id="RHEA-COMP:14527"/>
        <dbReference type="Rhea" id="RHEA-COMP:17342"/>
        <dbReference type="ChEBI" id="CHEBI:33019"/>
        <dbReference type="ChEBI" id="CHEBI:61557"/>
        <dbReference type="ChEBI" id="CHEBI:140395"/>
        <dbReference type="EC" id="2.7.7.6"/>
    </reaction>
</comment>
<comment type="cofactor">
    <cofactor evidence="1">
        <name>Mg(2+)</name>
        <dbReference type="ChEBI" id="CHEBI:18420"/>
    </cofactor>
    <text evidence="1">Binds 1 Mg(2+) ion per subunit.</text>
</comment>
<comment type="cofactor">
    <cofactor evidence="1">
        <name>Zn(2+)</name>
        <dbReference type="ChEBI" id="CHEBI:29105"/>
    </cofactor>
    <text evidence="1">Binds 2 Zn(2+) ions per subunit.</text>
</comment>
<comment type="subunit">
    <text evidence="1">The RNAP catalytic core consists of 2 alpha, 1 beta, 1 beta' and 1 omega subunit. When a sigma factor is associated with the core the holoenzyme is formed, which can initiate transcription.</text>
</comment>
<comment type="similarity">
    <text evidence="1">Belongs to the RNA polymerase beta' chain family.</text>
</comment>
<reference key="1">
    <citation type="journal article" date="2007" name="Nat. Biotechnol.">
        <title>Complete genome sequence of the myxobacterium Sorangium cellulosum.</title>
        <authorList>
            <person name="Schneiker S."/>
            <person name="Perlova O."/>
            <person name="Kaiser O."/>
            <person name="Gerth K."/>
            <person name="Alici A."/>
            <person name="Altmeyer M.O."/>
            <person name="Bartels D."/>
            <person name="Bekel T."/>
            <person name="Beyer S."/>
            <person name="Bode E."/>
            <person name="Bode H.B."/>
            <person name="Bolten C.J."/>
            <person name="Choudhuri J.V."/>
            <person name="Doss S."/>
            <person name="Elnakady Y.A."/>
            <person name="Frank B."/>
            <person name="Gaigalat L."/>
            <person name="Goesmann A."/>
            <person name="Groeger C."/>
            <person name="Gross F."/>
            <person name="Jelsbak L."/>
            <person name="Jelsbak L."/>
            <person name="Kalinowski J."/>
            <person name="Kegler C."/>
            <person name="Knauber T."/>
            <person name="Konietzny S."/>
            <person name="Kopp M."/>
            <person name="Krause L."/>
            <person name="Krug D."/>
            <person name="Linke B."/>
            <person name="Mahmud T."/>
            <person name="Martinez-Arias R."/>
            <person name="McHardy A.C."/>
            <person name="Merai M."/>
            <person name="Meyer F."/>
            <person name="Mormann S."/>
            <person name="Munoz-Dorado J."/>
            <person name="Perez J."/>
            <person name="Pradella S."/>
            <person name="Rachid S."/>
            <person name="Raddatz G."/>
            <person name="Rosenau F."/>
            <person name="Rueckert C."/>
            <person name="Sasse F."/>
            <person name="Scharfe M."/>
            <person name="Schuster S.C."/>
            <person name="Suen G."/>
            <person name="Treuner-Lange A."/>
            <person name="Velicer G.J."/>
            <person name="Vorholter F.-J."/>
            <person name="Weissman K.J."/>
            <person name="Welch R.D."/>
            <person name="Wenzel S.C."/>
            <person name="Whitworth D.E."/>
            <person name="Wilhelm S."/>
            <person name="Wittmann C."/>
            <person name="Bloecker H."/>
            <person name="Puehler A."/>
            <person name="Mueller R."/>
        </authorList>
    </citation>
    <scope>NUCLEOTIDE SEQUENCE [LARGE SCALE GENOMIC DNA]</scope>
    <source>
        <strain>So ce56</strain>
    </source>
</reference>
<dbReference type="EC" id="2.7.7.6" evidence="1"/>
<dbReference type="EMBL" id="AM746676">
    <property type="protein sequence ID" value="CAN90568.1"/>
    <property type="molecule type" value="Genomic_DNA"/>
</dbReference>
<dbReference type="RefSeq" id="WP_012233046.1">
    <property type="nucleotide sequence ID" value="NC_010162.1"/>
</dbReference>
<dbReference type="SMR" id="A9GRB4"/>
<dbReference type="STRING" id="448385.sce0411"/>
<dbReference type="KEGG" id="scl:sce0411"/>
<dbReference type="eggNOG" id="COG0086">
    <property type="taxonomic scope" value="Bacteria"/>
</dbReference>
<dbReference type="HOGENOM" id="CLU_000524_3_1_7"/>
<dbReference type="OrthoDB" id="9815296at2"/>
<dbReference type="BioCyc" id="SCEL448385:SCE_RS02165-MONOMER"/>
<dbReference type="Proteomes" id="UP000002139">
    <property type="component" value="Chromosome"/>
</dbReference>
<dbReference type="GO" id="GO:0000428">
    <property type="term" value="C:DNA-directed RNA polymerase complex"/>
    <property type="evidence" value="ECO:0007669"/>
    <property type="project" value="UniProtKB-KW"/>
</dbReference>
<dbReference type="GO" id="GO:0003677">
    <property type="term" value="F:DNA binding"/>
    <property type="evidence" value="ECO:0007669"/>
    <property type="project" value="UniProtKB-UniRule"/>
</dbReference>
<dbReference type="GO" id="GO:0003899">
    <property type="term" value="F:DNA-directed RNA polymerase activity"/>
    <property type="evidence" value="ECO:0007669"/>
    <property type="project" value="UniProtKB-UniRule"/>
</dbReference>
<dbReference type="GO" id="GO:0000287">
    <property type="term" value="F:magnesium ion binding"/>
    <property type="evidence" value="ECO:0007669"/>
    <property type="project" value="UniProtKB-UniRule"/>
</dbReference>
<dbReference type="GO" id="GO:0008270">
    <property type="term" value="F:zinc ion binding"/>
    <property type="evidence" value="ECO:0007669"/>
    <property type="project" value="UniProtKB-UniRule"/>
</dbReference>
<dbReference type="GO" id="GO:0006351">
    <property type="term" value="P:DNA-templated transcription"/>
    <property type="evidence" value="ECO:0007669"/>
    <property type="project" value="UniProtKB-UniRule"/>
</dbReference>
<dbReference type="CDD" id="cd02655">
    <property type="entry name" value="RNAP_beta'_C"/>
    <property type="match status" value="1"/>
</dbReference>
<dbReference type="CDD" id="cd01609">
    <property type="entry name" value="RNAP_beta'_N"/>
    <property type="match status" value="1"/>
</dbReference>
<dbReference type="FunFam" id="1.10.132.30:FF:000003">
    <property type="entry name" value="DNA-directed RNA polymerase subunit beta"/>
    <property type="match status" value="1"/>
</dbReference>
<dbReference type="FunFam" id="1.10.40.90:FF:000001">
    <property type="entry name" value="DNA-directed RNA polymerase subunit beta"/>
    <property type="match status" value="1"/>
</dbReference>
<dbReference type="Gene3D" id="1.10.132.30">
    <property type="match status" value="1"/>
</dbReference>
<dbReference type="Gene3D" id="1.10.150.390">
    <property type="match status" value="1"/>
</dbReference>
<dbReference type="Gene3D" id="1.10.1790.20">
    <property type="match status" value="1"/>
</dbReference>
<dbReference type="Gene3D" id="1.10.40.90">
    <property type="match status" value="1"/>
</dbReference>
<dbReference type="Gene3D" id="2.40.40.20">
    <property type="match status" value="1"/>
</dbReference>
<dbReference type="Gene3D" id="2.40.50.100">
    <property type="match status" value="3"/>
</dbReference>
<dbReference type="Gene3D" id="4.10.860.120">
    <property type="entry name" value="RNA polymerase II, clamp domain"/>
    <property type="match status" value="1"/>
</dbReference>
<dbReference type="Gene3D" id="1.10.274.100">
    <property type="entry name" value="RNA polymerase Rpb1, domain 3"/>
    <property type="match status" value="1"/>
</dbReference>
<dbReference type="HAMAP" id="MF_01322">
    <property type="entry name" value="RNApol_bact_RpoC"/>
    <property type="match status" value="1"/>
</dbReference>
<dbReference type="InterPro" id="IPR045867">
    <property type="entry name" value="DNA-dir_RpoC_beta_prime"/>
</dbReference>
<dbReference type="InterPro" id="IPR012754">
    <property type="entry name" value="DNA-dir_RpoC_beta_prime_bact"/>
</dbReference>
<dbReference type="InterPro" id="IPR000722">
    <property type="entry name" value="RNA_pol_asu"/>
</dbReference>
<dbReference type="InterPro" id="IPR006592">
    <property type="entry name" value="RNA_pol_N"/>
</dbReference>
<dbReference type="InterPro" id="IPR007080">
    <property type="entry name" value="RNA_pol_Rpb1_1"/>
</dbReference>
<dbReference type="InterPro" id="IPR007066">
    <property type="entry name" value="RNA_pol_Rpb1_3"/>
</dbReference>
<dbReference type="InterPro" id="IPR042102">
    <property type="entry name" value="RNA_pol_Rpb1_3_sf"/>
</dbReference>
<dbReference type="InterPro" id="IPR007083">
    <property type="entry name" value="RNA_pol_Rpb1_4"/>
</dbReference>
<dbReference type="InterPro" id="IPR007081">
    <property type="entry name" value="RNA_pol_Rpb1_5"/>
</dbReference>
<dbReference type="InterPro" id="IPR044893">
    <property type="entry name" value="RNA_pol_Rpb1_clamp_domain"/>
</dbReference>
<dbReference type="InterPro" id="IPR038120">
    <property type="entry name" value="Rpb1_funnel_sf"/>
</dbReference>
<dbReference type="NCBIfam" id="TIGR02386">
    <property type="entry name" value="rpoC_TIGR"/>
    <property type="match status" value="1"/>
</dbReference>
<dbReference type="PANTHER" id="PTHR19376">
    <property type="entry name" value="DNA-DIRECTED RNA POLYMERASE"/>
    <property type="match status" value="1"/>
</dbReference>
<dbReference type="PANTHER" id="PTHR19376:SF54">
    <property type="entry name" value="DNA-DIRECTED RNA POLYMERASE SUBUNIT BETA"/>
    <property type="match status" value="1"/>
</dbReference>
<dbReference type="Pfam" id="PF04997">
    <property type="entry name" value="RNA_pol_Rpb1_1"/>
    <property type="match status" value="1"/>
</dbReference>
<dbReference type="Pfam" id="PF00623">
    <property type="entry name" value="RNA_pol_Rpb1_2"/>
    <property type="match status" value="1"/>
</dbReference>
<dbReference type="Pfam" id="PF04983">
    <property type="entry name" value="RNA_pol_Rpb1_3"/>
    <property type="match status" value="1"/>
</dbReference>
<dbReference type="Pfam" id="PF05000">
    <property type="entry name" value="RNA_pol_Rpb1_4"/>
    <property type="match status" value="1"/>
</dbReference>
<dbReference type="Pfam" id="PF04998">
    <property type="entry name" value="RNA_pol_Rpb1_5"/>
    <property type="match status" value="1"/>
</dbReference>
<dbReference type="SMART" id="SM00663">
    <property type="entry name" value="RPOLA_N"/>
    <property type="match status" value="1"/>
</dbReference>
<dbReference type="SUPFAM" id="SSF64484">
    <property type="entry name" value="beta and beta-prime subunits of DNA dependent RNA-polymerase"/>
    <property type="match status" value="1"/>
</dbReference>
<feature type="chain" id="PRO_0000353439" description="DNA-directed RNA polymerase subunit beta'">
    <location>
        <begin position="1"/>
        <end position="1427"/>
    </location>
</feature>
<feature type="binding site" evidence="1">
    <location>
        <position position="70"/>
    </location>
    <ligand>
        <name>Zn(2+)</name>
        <dbReference type="ChEBI" id="CHEBI:29105"/>
        <label>1</label>
    </ligand>
</feature>
<feature type="binding site" evidence="1">
    <location>
        <position position="72"/>
    </location>
    <ligand>
        <name>Zn(2+)</name>
        <dbReference type="ChEBI" id="CHEBI:29105"/>
        <label>1</label>
    </ligand>
</feature>
<feature type="binding site" evidence="1">
    <location>
        <position position="85"/>
    </location>
    <ligand>
        <name>Zn(2+)</name>
        <dbReference type="ChEBI" id="CHEBI:29105"/>
        <label>1</label>
    </ligand>
</feature>
<feature type="binding site" evidence="1">
    <location>
        <position position="88"/>
    </location>
    <ligand>
        <name>Zn(2+)</name>
        <dbReference type="ChEBI" id="CHEBI:29105"/>
        <label>1</label>
    </ligand>
</feature>
<feature type="binding site" evidence="1">
    <location>
        <position position="461"/>
    </location>
    <ligand>
        <name>Mg(2+)</name>
        <dbReference type="ChEBI" id="CHEBI:18420"/>
    </ligand>
</feature>
<feature type="binding site" evidence="1">
    <location>
        <position position="463"/>
    </location>
    <ligand>
        <name>Mg(2+)</name>
        <dbReference type="ChEBI" id="CHEBI:18420"/>
    </ligand>
</feature>
<feature type="binding site" evidence="1">
    <location>
        <position position="465"/>
    </location>
    <ligand>
        <name>Mg(2+)</name>
        <dbReference type="ChEBI" id="CHEBI:18420"/>
    </ligand>
</feature>
<feature type="binding site" evidence="1">
    <location>
        <position position="838"/>
    </location>
    <ligand>
        <name>Zn(2+)</name>
        <dbReference type="ChEBI" id="CHEBI:29105"/>
        <label>2</label>
    </ligand>
</feature>
<feature type="binding site" evidence="1">
    <location>
        <position position="912"/>
    </location>
    <ligand>
        <name>Zn(2+)</name>
        <dbReference type="ChEBI" id="CHEBI:29105"/>
        <label>2</label>
    </ligand>
</feature>
<feature type="binding site" evidence="1">
    <location>
        <position position="919"/>
    </location>
    <ligand>
        <name>Zn(2+)</name>
        <dbReference type="ChEBI" id="CHEBI:29105"/>
        <label>2</label>
    </ligand>
</feature>
<feature type="binding site" evidence="1">
    <location>
        <position position="922"/>
    </location>
    <ligand>
        <name>Zn(2+)</name>
        <dbReference type="ChEBI" id="CHEBI:29105"/>
        <label>2</label>
    </ligand>
</feature>
<organism>
    <name type="scientific">Sorangium cellulosum (strain So ce56)</name>
    <name type="common">Polyangium cellulosum (strain So ce56)</name>
    <dbReference type="NCBI Taxonomy" id="448385"/>
    <lineage>
        <taxon>Bacteria</taxon>
        <taxon>Pseudomonadati</taxon>
        <taxon>Myxococcota</taxon>
        <taxon>Polyangia</taxon>
        <taxon>Polyangiales</taxon>
        <taxon>Polyangiaceae</taxon>
        <taxon>Sorangium</taxon>
    </lineage>
</organism>
<name>RPOC_SORC5</name>
<sequence length="1427" mass="158828">MRDIFSFFEKPKDPLSFSAIRISLASPEKIREWSHGEVKKPETINYRTFKPERDGLFCAKIFGPVKDYECNCGKYKRMKHRGIVCEKCGVEVIQSKVRRERLGHISLATPVAHIWFLKSLPSRIGNMLDITLKDLEKVLYCEAYIVIDPKETGLMRGDLLSEERYLQLLDEYGDDKFSAGMGGEAILEMLKQVDVHGLAELLRTEMRAATSEAKRKKLAKRLKVVEAFRESGNRPEWMMLTVIPVLPPDLRPLVPLDGGRFATSDLNDLYRRVINRNNRLKRLLELNAPEIIIRNERRMLQEAVDALFDNGRRGKTITGPNKRPLKSLSDMLKGKQGRFRQNLLGKRVDYSGRSVIVVGPTLRLHQCGLPKKMALELFKPFIYNKLEERGYVNTIKSAKKMVEKERPEVWDILEEVISEHPVLLNRAPTLHRLGIQAFEPVLIEGKAIQLHPLVCAAFNADFDGDQMAVHVPLSVEAQMEARVLMMSTNNILSPASGKPIINPTQDIVLGLYYATRERKFEKGSYRADTLAFGEDGVAQGYLRGIYASLEEVRMAYDNGEVALHAGIRVRVPIIDDDGNPQLDEFGHVKRRIVETTVGRVIISEVLPKGVAFEYANKTLDKKALSALIDVCYRIHRNKETVLLADRLRTLGFDHAMRAGISICMDHMVIPPAKKVLLGEAQKEVERVVEQYQEGLITDGERYNKIVDIWASIADQVTTEMMAGIGKETVVDHETGKESIEPSFNPIYIMADSGARGSTQQIRQLAAMRGLMAKPSGEIIETPITANFREGLSVLQYFISTHGARKGLADTALKTANSGYLTRRLVDVAQDAVISEFDCGTLDGIRVAKLEEAGEVIQPLGDRILGRVALEDVVDPLTGEVLITANTELDEQAVRSIEDAGIEEVVIRSVLTCQLRRGVCALCYGRDLARGYRVNIGEAVGIIAAQSIGEPGTQLTMRTFHIGGTAARGKIEASYLEARTEGTVRLRRAVVQKKKDGTMVVMNRHGEIVVVDETGREREHNRLVYGAILKKADGERTKPGELLAEWDQFATPILTEVSGVVKFGDLIEGVSVQDRLDEVTGLSRKVVIESKAADVRPRISLKDPESGKTLKLPNSELEARYLLPVGAHIVAQEGDLIEAGEVIAKIPRDTTKVQDITGGLPRVAELFEARKPKDHAIISEIDGEVTFGKDTKGKRKVIITPYSPDGHALGDQAREYLIPKGKHIQVQPGDRVRAGDPLQDGPPNPHDILRVKGEKELSAWLVNEIQQVYRLQGVGINDKHIEVIVRQMLRRVRVREVGDTNFLVDEQVEKHIFEKENETVLERGGKPAIAEALLLGITKASLSTESFISASSFQETTKVLTEAAINGKTDDLRGLKENVIMGRLIPAGTGLPAYKRLQVVVEGEPVAQAPYVAPRPRPEETLTAVNEE</sequence>
<accession>A9GRB4</accession>
<proteinExistence type="inferred from homology"/>
<evidence type="ECO:0000255" key="1">
    <source>
        <dbReference type="HAMAP-Rule" id="MF_01322"/>
    </source>
</evidence>
<gene>
    <name evidence="1" type="primary">rpoC</name>
    <name type="ordered locus">sce0411</name>
</gene>